<gene>
    <name evidence="1" type="primary">lysK</name>
    <name type="ordered locus">DR_1413</name>
</gene>
<feature type="chain" id="PRO_0000185342" description="[LysW]-lysine hydrolase">
    <location>
        <begin position="1"/>
        <end position="362"/>
    </location>
</feature>
<feature type="active site" evidence="1">
    <location>
        <position position="71"/>
    </location>
</feature>
<feature type="active site" description="Proton acceptor" evidence="1">
    <location>
        <position position="127"/>
    </location>
</feature>
<feature type="binding site" evidence="1">
    <location>
        <position position="69"/>
    </location>
    <ligand>
        <name>Zn(2+)</name>
        <dbReference type="ChEBI" id="CHEBI:29105"/>
        <label>1</label>
    </ligand>
</feature>
<feature type="binding site" evidence="1">
    <location>
        <position position="94"/>
    </location>
    <ligand>
        <name>Zn(2+)</name>
        <dbReference type="ChEBI" id="CHEBI:29105"/>
        <label>1</label>
    </ligand>
</feature>
<feature type="binding site" evidence="1">
    <location>
        <position position="94"/>
    </location>
    <ligand>
        <name>Zn(2+)</name>
        <dbReference type="ChEBI" id="CHEBI:29105"/>
        <label>2</label>
    </ligand>
</feature>
<feature type="binding site" evidence="1">
    <location>
        <position position="128"/>
    </location>
    <ligand>
        <name>Zn(2+)</name>
        <dbReference type="ChEBI" id="CHEBI:29105"/>
        <label>2</label>
    </ligand>
</feature>
<feature type="binding site" evidence="1">
    <location>
        <position position="151"/>
    </location>
    <ligand>
        <name>Zn(2+)</name>
        <dbReference type="ChEBI" id="CHEBI:29105"/>
        <label>1</label>
    </ligand>
</feature>
<feature type="binding site" evidence="1">
    <location>
        <position position="334"/>
    </location>
    <ligand>
        <name>Zn(2+)</name>
        <dbReference type="ChEBI" id="CHEBI:29105"/>
        <label>2</label>
    </ligand>
</feature>
<organism>
    <name type="scientific">Deinococcus radiodurans (strain ATCC 13939 / DSM 20539 / JCM 16871 / CCUG 27074 / LMG 4051 / NBRC 15346 / NCIMB 9279 / VKM B-1422 / R1)</name>
    <dbReference type="NCBI Taxonomy" id="243230"/>
    <lineage>
        <taxon>Bacteria</taxon>
        <taxon>Thermotogati</taxon>
        <taxon>Deinococcota</taxon>
        <taxon>Deinococci</taxon>
        <taxon>Deinococcales</taxon>
        <taxon>Deinococcaceae</taxon>
        <taxon>Deinococcus</taxon>
    </lineage>
</organism>
<comment type="function">
    <text evidence="1">Catalyzes the release of L-lysine from [LysW]-gamma-L-lysine.</text>
</comment>
<comment type="catalytic activity">
    <reaction evidence="1">
        <text>[amino-group carrier protein]-C-terminal-gamma-(L-lysyl)-L-glutamate + H2O = [amino-group carrier protein]-C-terminal-L-glutamate + L-lysine</text>
        <dbReference type="Rhea" id="RHEA:48684"/>
        <dbReference type="Rhea" id="RHEA-COMP:9693"/>
        <dbReference type="Rhea" id="RHEA-COMP:9715"/>
        <dbReference type="ChEBI" id="CHEBI:15377"/>
        <dbReference type="ChEBI" id="CHEBI:32551"/>
        <dbReference type="ChEBI" id="CHEBI:78525"/>
        <dbReference type="ChEBI" id="CHEBI:78526"/>
        <dbReference type="EC" id="3.5.1.130"/>
    </reaction>
</comment>
<comment type="cofactor">
    <cofactor evidence="1">
        <name>Zn(2+)</name>
        <dbReference type="ChEBI" id="CHEBI:29105"/>
    </cofactor>
    <cofactor evidence="1">
        <name>Co(2+)</name>
        <dbReference type="ChEBI" id="CHEBI:48828"/>
    </cofactor>
    <text evidence="1">Binds 2 Zn(2+) or Co(2+) ions per subunit.</text>
</comment>
<comment type="pathway">
    <text evidence="1">Amino-acid biosynthesis; L-lysine biosynthesis via AAA pathway; L-lysine from L-alpha-aminoadipate (Thermus route): step 5/5.</text>
</comment>
<comment type="subcellular location">
    <subcellularLocation>
        <location evidence="1">Cytoplasm</location>
    </subcellularLocation>
</comment>
<comment type="similarity">
    <text evidence="1">Belongs to the peptidase M20A family. LysK subfamily.</text>
</comment>
<name>LYSK_DEIRA</name>
<accession>Q9RUH3</accession>
<reference key="1">
    <citation type="journal article" date="1999" name="Science">
        <title>Genome sequence of the radioresistant bacterium Deinococcus radiodurans R1.</title>
        <authorList>
            <person name="White O."/>
            <person name="Eisen J.A."/>
            <person name="Heidelberg J.F."/>
            <person name="Hickey E.K."/>
            <person name="Peterson J.D."/>
            <person name="Dodson R.J."/>
            <person name="Haft D.H."/>
            <person name="Gwinn M.L."/>
            <person name="Nelson W.C."/>
            <person name="Richardson D.L."/>
            <person name="Moffat K.S."/>
            <person name="Qin H."/>
            <person name="Jiang L."/>
            <person name="Pamphile W."/>
            <person name="Crosby M."/>
            <person name="Shen M."/>
            <person name="Vamathevan J.J."/>
            <person name="Lam P."/>
            <person name="McDonald L.A."/>
            <person name="Utterback T.R."/>
            <person name="Zalewski C."/>
            <person name="Makarova K.S."/>
            <person name="Aravind L."/>
            <person name="Daly M.J."/>
            <person name="Minton K.W."/>
            <person name="Fleischmann R.D."/>
            <person name="Ketchum K.A."/>
            <person name="Nelson K.E."/>
            <person name="Salzberg S.L."/>
            <person name="Smith H.O."/>
            <person name="Venter J.C."/>
            <person name="Fraser C.M."/>
        </authorList>
    </citation>
    <scope>NUCLEOTIDE SEQUENCE [LARGE SCALE GENOMIC DNA]</scope>
    <source>
        <strain>ATCC 13939 / DSM 20539 / JCM 16871 / CCUG 27074 / LMG 4051 / NBRC 15346 / NCIMB 9279 / VKM B-1422 / R1</strain>
    </source>
</reference>
<protein>
    <recommendedName>
        <fullName evidence="1">[LysW]-lysine hydrolase</fullName>
        <ecNumber evidence="1">3.5.1.130</ecNumber>
    </recommendedName>
</protein>
<evidence type="ECO:0000255" key="1">
    <source>
        <dbReference type="HAMAP-Rule" id="MF_01120"/>
    </source>
</evidence>
<dbReference type="EC" id="3.5.1.130" evidence="1"/>
<dbReference type="EMBL" id="AE000513">
    <property type="protein sequence ID" value="AAF10979.1"/>
    <property type="molecule type" value="Genomic_DNA"/>
</dbReference>
<dbReference type="PIR" id="H75398">
    <property type="entry name" value="H75398"/>
</dbReference>
<dbReference type="RefSeq" id="NP_295136.1">
    <property type="nucleotide sequence ID" value="NC_001263.1"/>
</dbReference>
<dbReference type="RefSeq" id="WP_010888052.1">
    <property type="nucleotide sequence ID" value="NC_001263.1"/>
</dbReference>
<dbReference type="SMR" id="Q9RUH3"/>
<dbReference type="STRING" id="243230.DR_1413"/>
<dbReference type="MEROPS" id="M20.022"/>
<dbReference type="PaxDb" id="243230-DR_1413"/>
<dbReference type="EnsemblBacteria" id="AAF10979">
    <property type="protein sequence ID" value="AAF10979"/>
    <property type="gene ID" value="DR_1413"/>
</dbReference>
<dbReference type="GeneID" id="69517653"/>
<dbReference type="KEGG" id="dra:DR_1413"/>
<dbReference type="PATRIC" id="fig|243230.17.peg.1609"/>
<dbReference type="eggNOG" id="COG0624">
    <property type="taxonomic scope" value="Bacteria"/>
</dbReference>
<dbReference type="HOGENOM" id="CLU_021802_2_0_0"/>
<dbReference type="InParanoid" id="Q9RUH3"/>
<dbReference type="OrthoDB" id="9792335at2"/>
<dbReference type="UniPathway" id="UPA00033">
    <property type="reaction ID" value="UER00039"/>
</dbReference>
<dbReference type="Proteomes" id="UP000002524">
    <property type="component" value="Chromosome 1"/>
</dbReference>
<dbReference type="GO" id="GO:0005737">
    <property type="term" value="C:cytoplasm"/>
    <property type="evidence" value="ECO:0007669"/>
    <property type="project" value="UniProtKB-SubCell"/>
</dbReference>
<dbReference type="GO" id="GO:0050897">
    <property type="term" value="F:cobalt ion binding"/>
    <property type="evidence" value="ECO:0007669"/>
    <property type="project" value="UniProtKB-UniRule"/>
</dbReference>
<dbReference type="GO" id="GO:0016811">
    <property type="term" value="F:hydrolase activity, acting on carbon-nitrogen (but not peptide) bonds, in linear amides"/>
    <property type="evidence" value="ECO:0007669"/>
    <property type="project" value="UniProtKB-UniRule"/>
</dbReference>
<dbReference type="GO" id="GO:0008270">
    <property type="term" value="F:zinc ion binding"/>
    <property type="evidence" value="ECO:0007669"/>
    <property type="project" value="UniProtKB-UniRule"/>
</dbReference>
<dbReference type="GO" id="GO:0019878">
    <property type="term" value="P:lysine biosynthetic process via aminoadipic acid"/>
    <property type="evidence" value="ECO:0007669"/>
    <property type="project" value="UniProtKB-UniRule"/>
</dbReference>
<dbReference type="CDD" id="cd05653">
    <property type="entry name" value="M20_ArgE_LysK"/>
    <property type="match status" value="1"/>
</dbReference>
<dbReference type="Gene3D" id="3.40.630.10">
    <property type="entry name" value="Zn peptidases"/>
    <property type="match status" value="2"/>
</dbReference>
<dbReference type="HAMAP" id="MF_01120">
    <property type="entry name" value="LysK"/>
    <property type="match status" value="1"/>
</dbReference>
<dbReference type="InterPro" id="IPR001261">
    <property type="entry name" value="ArgE/DapE_CS"/>
</dbReference>
<dbReference type="InterPro" id="IPR010175">
    <property type="entry name" value="LysK"/>
</dbReference>
<dbReference type="InterPro" id="IPR002933">
    <property type="entry name" value="Peptidase_M20"/>
</dbReference>
<dbReference type="InterPro" id="IPR050072">
    <property type="entry name" value="Peptidase_M20A"/>
</dbReference>
<dbReference type="NCBIfam" id="TIGR01902">
    <property type="entry name" value="dapE-lys-deAc"/>
    <property type="match status" value="1"/>
</dbReference>
<dbReference type="NCBIfam" id="NF003367">
    <property type="entry name" value="PRK04443.1"/>
    <property type="match status" value="1"/>
</dbReference>
<dbReference type="PANTHER" id="PTHR43808:SF28">
    <property type="entry name" value="[LYSW]-LYSINE_[LYSW]-ORNITHINE HYDROLASE"/>
    <property type="match status" value="1"/>
</dbReference>
<dbReference type="PANTHER" id="PTHR43808">
    <property type="entry name" value="ACETYLORNITHINE DEACETYLASE"/>
    <property type="match status" value="1"/>
</dbReference>
<dbReference type="Pfam" id="PF01546">
    <property type="entry name" value="Peptidase_M20"/>
    <property type="match status" value="1"/>
</dbReference>
<dbReference type="SUPFAM" id="SSF53187">
    <property type="entry name" value="Zn-dependent exopeptidases"/>
    <property type="match status" value="1"/>
</dbReference>
<dbReference type="PROSITE" id="PS00758">
    <property type="entry name" value="ARGE_DAPE_CPG2_1"/>
    <property type="match status" value="1"/>
</dbReference>
<keyword id="KW-0028">Amino-acid biosynthesis</keyword>
<keyword id="KW-0170">Cobalt</keyword>
<keyword id="KW-0963">Cytoplasm</keyword>
<keyword id="KW-0378">Hydrolase</keyword>
<keyword id="KW-0457">Lysine biosynthesis</keyword>
<keyword id="KW-0479">Metal-binding</keyword>
<keyword id="KW-1185">Reference proteome</keyword>
<keyword id="KW-0862">Zinc</keyword>
<sequence>MTPTPDAQAARELIRQAVSIPSLSGEEQAIAAFLRDWMARRGFDAQVDEAGNAVGVRGSGPLTVALLGHMDTVPGDIPVRVDEAGVLHGRGSVDAKGSLCTFIAAVSALPPEALSAARFVCIGATEEEAPSSKGARYAMRQHRPDFVLIGEPSGWAGLTLGYKGRLVAKVRVEKDNFHTAGDGTSAADDLTLGWQRVREWAAGFAPADSGGGGIFDRVQVTLQDLGSSGDGLTQRAWATIGLRLPPALAPYQAEEAIEQAFAGLGADLTFTGHESAVRHPKDNALTRALRVAIREQGGTPTFKVKTGTSDMNVVAELWPVPTLAYGPGDSALDHTPEERLDLAEYDRAVAVLTSALTRLVGG</sequence>
<proteinExistence type="inferred from homology"/>